<sequence length="218" mass="23186">MSIGILGKKLGMSQLFDEQGRAVPVTLIEAGPCRITQLKNDDTDGYAAVQIGFGETREKLINKPSKGHLTKSGEDLLRHLREYRVDNVDGLELGGSITVSDFEAGQKVDVSGDTMGRGFAGLQKRHGFSRGPMTHGSKNHRQPGSIGAGTTPGRIYPGKRMSGRYGGKKTTTRGLTILRIDSDRNLLVVKGSVPGKPGALLNIKPAVRVGAKPAKGGK</sequence>
<accession>Q3AUW3</accession>
<comment type="function">
    <text evidence="1">One of the primary rRNA binding proteins, it binds directly near the 3'-end of the 23S rRNA, where it nucleates assembly of the 50S subunit.</text>
</comment>
<comment type="subunit">
    <text evidence="1">Part of the 50S ribosomal subunit. Forms a cluster with proteins L14 and L19.</text>
</comment>
<comment type="similarity">
    <text evidence="1">Belongs to the universal ribosomal protein uL3 family.</text>
</comment>
<organism>
    <name type="scientific">Synechococcus sp. (strain CC9902)</name>
    <dbReference type="NCBI Taxonomy" id="316279"/>
    <lineage>
        <taxon>Bacteria</taxon>
        <taxon>Bacillati</taxon>
        <taxon>Cyanobacteriota</taxon>
        <taxon>Cyanophyceae</taxon>
        <taxon>Synechococcales</taxon>
        <taxon>Synechococcaceae</taxon>
        <taxon>Synechococcus</taxon>
    </lineage>
</organism>
<keyword id="KW-1185">Reference proteome</keyword>
<keyword id="KW-0687">Ribonucleoprotein</keyword>
<keyword id="KW-0689">Ribosomal protein</keyword>
<keyword id="KW-0694">RNA-binding</keyword>
<keyword id="KW-0699">rRNA-binding</keyword>
<reference key="1">
    <citation type="submission" date="2005-08" db="EMBL/GenBank/DDBJ databases">
        <title>Complete sequence of Synechococcus sp. CC9902.</title>
        <authorList>
            <person name="Copeland A."/>
            <person name="Lucas S."/>
            <person name="Lapidus A."/>
            <person name="Barry K."/>
            <person name="Detter J.C."/>
            <person name="Glavina T."/>
            <person name="Hammon N."/>
            <person name="Israni S."/>
            <person name="Pitluck S."/>
            <person name="Martinez M."/>
            <person name="Schmutz J."/>
            <person name="Larimer F."/>
            <person name="Land M."/>
            <person name="Kyrpides N."/>
            <person name="Ivanova N."/>
            <person name="Richardson P."/>
        </authorList>
    </citation>
    <scope>NUCLEOTIDE SEQUENCE [LARGE SCALE GENOMIC DNA]</scope>
    <source>
        <strain>CC9902</strain>
    </source>
</reference>
<dbReference type="EMBL" id="CP000097">
    <property type="protein sequence ID" value="ABB26913.1"/>
    <property type="molecule type" value="Genomic_DNA"/>
</dbReference>
<dbReference type="RefSeq" id="WP_011360714.1">
    <property type="nucleotide sequence ID" value="NC_007513.1"/>
</dbReference>
<dbReference type="SMR" id="Q3AUW3"/>
<dbReference type="STRING" id="316279.Syncc9902_1955"/>
<dbReference type="KEGG" id="sye:Syncc9902_1955"/>
<dbReference type="eggNOG" id="COG0087">
    <property type="taxonomic scope" value="Bacteria"/>
</dbReference>
<dbReference type="HOGENOM" id="CLU_044142_4_1_3"/>
<dbReference type="OrthoDB" id="9806135at2"/>
<dbReference type="Proteomes" id="UP000002712">
    <property type="component" value="Chromosome"/>
</dbReference>
<dbReference type="GO" id="GO:0022625">
    <property type="term" value="C:cytosolic large ribosomal subunit"/>
    <property type="evidence" value="ECO:0007669"/>
    <property type="project" value="TreeGrafter"/>
</dbReference>
<dbReference type="GO" id="GO:0019843">
    <property type="term" value="F:rRNA binding"/>
    <property type="evidence" value="ECO:0007669"/>
    <property type="project" value="UniProtKB-UniRule"/>
</dbReference>
<dbReference type="GO" id="GO:0003735">
    <property type="term" value="F:structural constituent of ribosome"/>
    <property type="evidence" value="ECO:0007669"/>
    <property type="project" value="InterPro"/>
</dbReference>
<dbReference type="GO" id="GO:0006412">
    <property type="term" value="P:translation"/>
    <property type="evidence" value="ECO:0007669"/>
    <property type="project" value="UniProtKB-UniRule"/>
</dbReference>
<dbReference type="FunFam" id="3.30.160.810:FF:000001">
    <property type="entry name" value="50S ribosomal protein L3"/>
    <property type="match status" value="1"/>
</dbReference>
<dbReference type="FunFam" id="2.40.30.10:FF:000065">
    <property type="entry name" value="50S ribosomal protein L3, chloroplastic"/>
    <property type="match status" value="1"/>
</dbReference>
<dbReference type="Gene3D" id="3.30.160.810">
    <property type="match status" value="1"/>
</dbReference>
<dbReference type="Gene3D" id="2.40.30.10">
    <property type="entry name" value="Translation factors"/>
    <property type="match status" value="1"/>
</dbReference>
<dbReference type="HAMAP" id="MF_01325_B">
    <property type="entry name" value="Ribosomal_uL3_B"/>
    <property type="match status" value="1"/>
</dbReference>
<dbReference type="InterPro" id="IPR000597">
    <property type="entry name" value="Ribosomal_uL3"/>
</dbReference>
<dbReference type="InterPro" id="IPR019927">
    <property type="entry name" value="Ribosomal_uL3_bac/org-type"/>
</dbReference>
<dbReference type="InterPro" id="IPR019926">
    <property type="entry name" value="Ribosomal_uL3_CS"/>
</dbReference>
<dbReference type="InterPro" id="IPR009000">
    <property type="entry name" value="Transl_B-barrel_sf"/>
</dbReference>
<dbReference type="NCBIfam" id="TIGR03625">
    <property type="entry name" value="L3_bact"/>
    <property type="match status" value="1"/>
</dbReference>
<dbReference type="PANTHER" id="PTHR11229">
    <property type="entry name" value="50S RIBOSOMAL PROTEIN L3"/>
    <property type="match status" value="1"/>
</dbReference>
<dbReference type="PANTHER" id="PTHR11229:SF16">
    <property type="entry name" value="LARGE RIBOSOMAL SUBUNIT PROTEIN UL3C"/>
    <property type="match status" value="1"/>
</dbReference>
<dbReference type="Pfam" id="PF00297">
    <property type="entry name" value="Ribosomal_L3"/>
    <property type="match status" value="1"/>
</dbReference>
<dbReference type="SUPFAM" id="SSF50447">
    <property type="entry name" value="Translation proteins"/>
    <property type="match status" value="1"/>
</dbReference>
<dbReference type="PROSITE" id="PS00474">
    <property type="entry name" value="RIBOSOMAL_L3"/>
    <property type="match status" value="1"/>
</dbReference>
<evidence type="ECO:0000255" key="1">
    <source>
        <dbReference type="HAMAP-Rule" id="MF_01325"/>
    </source>
</evidence>
<evidence type="ECO:0000256" key="2">
    <source>
        <dbReference type="SAM" id="MobiDB-lite"/>
    </source>
</evidence>
<evidence type="ECO:0000305" key="3"/>
<feature type="chain" id="PRO_0000241422" description="Large ribosomal subunit protein uL3">
    <location>
        <begin position="1"/>
        <end position="218"/>
    </location>
</feature>
<feature type="region of interest" description="Disordered" evidence="2">
    <location>
        <begin position="126"/>
        <end position="169"/>
    </location>
</feature>
<protein>
    <recommendedName>
        <fullName evidence="1">Large ribosomal subunit protein uL3</fullName>
    </recommendedName>
    <alternativeName>
        <fullName evidence="3">50S ribosomal protein L3</fullName>
    </alternativeName>
</protein>
<name>RL3_SYNS9</name>
<gene>
    <name evidence="1" type="primary">rplC</name>
    <name evidence="1" type="synonym">rpl3</name>
    <name type="ordered locus">Syncc9902_1955</name>
</gene>
<proteinExistence type="inferred from homology"/>